<gene>
    <name evidence="1" type="primary">rplT</name>
    <name type="ordered locus">AZC_4448</name>
</gene>
<sequence>MARVKRGVTSHAKHKKVFKAAKGFYGRRKNTIRAAKSAVERSMQYNYRDRKVKKRTFRALWIQRINAGVRELGMTYGRFIDGLGKAGIEVDRKVLSDIAVHEPETLKALVEKAQAALAA</sequence>
<reference key="1">
    <citation type="submission" date="2007-04" db="EMBL/GenBank/DDBJ databases">
        <title>Complete genome sequence of the nitrogen-fixing bacterium Azorhizobium caulinodans ORS571.</title>
        <authorList>
            <person name="Lee K.B."/>
            <person name="Backer P.D."/>
            <person name="Aono T."/>
            <person name="Liu C.T."/>
            <person name="Suzuki S."/>
            <person name="Suzuki T."/>
            <person name="Kaneko T."/>
            <person name="Yamada M."/>
            <person name="Tabata S."/>
            <person name="Kupfer D.M."/>
            <person name="Najar F.Z."/>
            <person name="Wiley G.B."/>
            <person name="Roe B."/>
            <person name="Binnewies T."/>
            <person name="Ussery D."/>
            <person name="Vereecke D."/>
            <person name="Gevers D."/>
            <person name="Holsters M."/>
            <person name="Oyaizu H."/>
        </authorList>
    </citation>
    <scope>NUCLEOTIDE SEQUENCE [LARGE SCALE GENOMIC DNA]</scope>
    <source>
        <strain>ATCC 43989 / DSM 5975 / JCM 20966 / LMG 6465 / NBRC 14845 / NCIMB 13405 / ORS 571</strain>
    </source>
</reference>
<name>RL20_AZOC5</name>
<keyword id="KW-1185">Reference proteome</keyword>
<keyword id="KW-0687">Ribonucleoprotein</keyword>
<keyword id="KW-0689">Ribosomal protein</keyword>
<keyword id="KW-0694">RNA-binding</keyword>
<keyword id="KW-0699">rRNA-binding</keyword>
<comment type="function">
    <text evidence="1">Binds directly to 23S ribosomal RNA and is necessary for the in vitro assembly process of the 50S ribosomal subunit. It is not involved in the protein synthesizing functions of that subunit.</text>
</comment>
<comment type="similarity">
    <text evidence="1">Belongs to the bacterial ribosomal protein bL20 family.</text>
</comment>
<proteinExistence type="inferred from homology"/>
<accession>A8HWM3</accession>
<evidence type="ECO:0000255" key="1">
    <source>
        <dbReference type="HAMAP-Rule" id="MF_00382"/>
    </source>
</evidence>
<evidence type="ECO:0000305" key="2"/>
<dbReference type="EMBL" id="AP009384">
    <property type="protein sequence ID" value="BAF90446.1"/>
    <property type="molecule type" value="Genomic_DNA"/>
</dbReference>
<dbReference type="RefSeq" id="WP_012172967.1">
    <property type="nucleotide sequence ID" value="NC_009937.1"/>
</dbReference>
<dbReference type="SMR" id="A8HWM3"/>
<dbReference type="STRING" id="438753.AZC_4448"/>
<dbReference type="KEGG" id="azc:AZC_4448"/>
<dbReference type="eggNOG" id="COG0292">
    <property type="taxonomic scope" value="Bacteria"/>
</dbReference>
<dbReference type="HOGENOM" id="CLU_123265_0_1_5"/>
<dbReference type="Proteomes" id="UP000000270">
    <property type="component" value="Chromosome"/>
</dbReference>
<dbReference type="GO" id="GO:1990904">
    <property type="term" value="C:ribonucleoprotein complex"/>
    <property type="evidence" value="ECO:0007669"/>
    <property type="project" value="UniProtKB-KW"/>
</dbReference>
<dbReference type="GO" id="GO:0005840">
    <property type="term" value="C:ribosome"/>
    <property type="evidence" value="ECO:0007669"/>
    <property type="project" value="UniProtKB-KW"/>
</dbReference>
<dbReference type="GO" id="GO:0019843">
    <property type="term" value="F:rRNA binding"/>
    <property type="evidence" value="ECO:0007669"/>
    <property type="project" value="UniProtKB-UniRule"/>
</dbReference>
<dbReference type="GO" id="GO:0003735">
    <property type="term" value="F:structural constituent of ribosome"/>
    <property type="evidence" value="ECO:0007669"/>
    <property type="project" value="InterPro"/>
</dbReference>
<dbReference type="GO" id="GO:0000027">
    <property type="term" value="P:ribosomal large subunit assembly"/>
    <property type="evidence" value="ECO:0007669"/>
    <property type="project" value="UniProtKB-UniRule"/>
</dbReference>
<dbReference type="GO" id="GO:0006412">
    <property type="term" value="P:translation"/>
    <property type="evidence" value="ECO:0007669"/>
    <property type="project" value="InterPro"/>
</dbReference>
<dbReference type="CDD" id="cd07026">
    <property type="entry name" value="Ribosomal_L20"/>
    <property type="match status" value="1"/>
</dbReference>
<dbReference type="FunFam" id="1.10.1900.20:FF:000001">
    <property type="entry name" value="50S ribosomal protein L20"/>
    <property type="match status" value="1"/>
</dbReference>
<dbReference type="Gene3D" id="6.10.160.10">
    <property type="match status" value="1"/>
</dbReference>
<dbReference type="Gene3D" id="1.10.1900.20">
    <property type="entry name" value="Ribosomal protein L20"/>
    <property type="match status" value="1"/>
</dbReference>
<dbReference type="HAMAP" id="MF_00382">
    <property type="entry name" value="Ribosomal_bL20"/>
    <property type="match status" value="1"/>
</dbReference>
<dbReference type="InterPro" id="IPR005813">
    <property type="entry name" value="Ribosomal_bL20"/>
</dbReference>
<dbReference type="InterPro" id="IPR049946">
    <property type="entry name" value="RIBOSOMAL_L20_CS"/>
</dbReference>
<dbReference type="InterPro" id="IPR035566">
    <property type="entry name" value="Ribosomal_protein_bL20_C"/>
</dbReference>
<dbReference type="NCBIfam" id="TIGR01032">
    <property type="entry name" value="rplT_bact"/>
    <property type="match status" value="1"/>
</dbReference>
<dbReference type="PANTHER" id="PTHR10986">
    <property type="entry name" value="39S RIBOSOMAL PROTEIN L20"/>
    <property type="match status" value="1"/>
</dbReference>
<dbReference type="Pfam" id="PF00453">
    <property type="entry name" value="Ribosomal_L20"/>
    <property type="match status" value="1"/>
</dbReference>
<dbReference type="PRINTS" id="PR00062">
    <property type="entry name" value="RIBOSOMALL20"/>
</dbReference>
<dbReference type="SUPFAM" id="SSF74731">
    <property type="entry name" value="Ribosomal protein L20"/>
    <property type="match status" value="1"/>
</dbReference>
<dbReference type="PROSITE" id="PS00937">
    <property type="entry name" value="RIBOSOMAL_L20"/>
    <property type="match status" value="1"/>
</dbReference>
<feature type="chain" id="PRO_1000072180" description="Large ribosomal subunit protein bL20">
    <location>
        <begin position="1"/>
        <end position="119"/>
    </location>
</feature>
<protein>
    <recommendedName>
        <fullName evidence="1">Large ribosomal subunit protein bL20</fullName>
    </recommendedName>
    <alternativeName>
        <fullName evidence="2">50S ribosomal protein L20</fullName>
    </alternativeName>
</protein>
<organism>
    <name type="scientific">Azorhizobium caulinodans (strain ATCC 43989 / DSM 5975 / JCM 20966 / LMG 6465 / NBRC 14845 / NCIMB 13405 / ORS 571)</name>
    <dbReference type="NCBI Taxonomy" id="438753"/>
    <lineage>
        <taxon>Bacteria</taxon>
        <taxon>Pseudomonadati</taxon>
        <taxon>Pseudomonadota</taxon>
        <taxon>Alphaproteobacteria</taxon>
        <taxon>Hyphomicrobiales</taxon>
        <taxon>Xanthobacteraceae</taxon>
        <taxon>Azorhizobium</taxon>
    </lineage>
</organism>